<reference key="1">
    <citation type="submission" date="2009-07" db="EMBL/GenBank/DDBJ databases">
        <title>Complete sequence of Pectobacterium carotovorum subsp. carotovorum PC1.</title>
        <authorList>
            <consortium name="US DOE Joint Genome Institute"/>
            <person name="Lucas S."/>
            <person name="Copeland A."/>
            <person name="Lapidus A."/>
            <person name="Glavina del Rio T."/>
            <person name="Tice H."/>
            <person name="Bruce D."/>
            <person name="Goodwin L."/>
            <person name="Pitluck S."/>
            <person name="Munk A.C."/>
            <person name="Brettin T."/>
            <person name="Detter J.C."/>
            <person name="Han C."/>
            <person name="Tapia R."/>
            <person name="Larimer F."/>
            <person name="Land M."/>
            <person name="Hauser L."/>
            <person name="Kyrpides N."/>
            <person name="Mikhailova N."/>
            <person name="Balakrishnan V."/>
            <person name="Glasner J."/>
            <person name="Perna N.T."/>
        </authorList>
    </citation>
    <scope>NUCLEOTIDE SEQUENCE [LARGE SCALE GENOMIC DNA]</scope>
    <source>
        <strain>PC1</strain>
    </source>
</reference>
<comment type="similarity">
    <text evidence="1">Belongs to the UPF0229 family.</text>
</comment>
<feature type="chain" id="PRO_1000214028" description="UPF0229 protein PC1_1960">
    <location>
        <begin position="1"/>
        <end position="424"/>
    </location>
</feature>
<feature type="region of interest" description="Disordered" evidence="2">
    <location>
        <begin position="46"/>
        <end position="109"/>
    </location>
</feature>
<feature type="compositionally biased region" description="Basic and acidic residues" evidence="2">
    <location>
        <begin position="77"/>
        <end position="90"/>
    </location>
</feature>
<feature type="compositionally biased region" description="Gly residues" evidence="2">
    <location>
        <begin position="92"/>
        <end position="101"/>
    </location>
</feature>
<proteinExistence type="inferred from homology"/>
<accession>C6DGV2</accession>
<sequence length="424" mass="49407">MAYFIDRRLNGKNKSTVNRQRFLRRYKSQIKQSISEAINKRSVTDIESGESVSIPNADINEPMFHQGRGGRRHRVHPGNDHFVQNDKIERPQGGGGGGSGQGDASKDGEGEDEFVFQISKDEYLDLLFEDLALPNLKKTQHRQMNEYKTHRAGYTANGVPANISVVRSLQNSLARRMAMTAGKRRTLHELEESLEQLAHTEPAQLLEEERLRQEITELRQKIARVPFIDTFDLRYKNYERRAEPSSQAVMFCLMDVSGSMDQATKDMAKRFYILLYLFLSRNYKNVDVVYIRHHTQAKEVDEQEFFYSQETGGTIVSSALKLMEEVVRERYDPSQWNIYAAQASDGDNWADDSPLCHQILANQLLPMVRYYSYIEITRRSHQTLWREYETLRDTFDNFAMQHIRDQDDIYPVFRELFRKQTVGH</sequence>
<name>Y1960_PECCP</name>
<dbReference type="EMBL" id="CP001657">
    <property type="protein sequence ID" value="ACT13001.1"/>
    <property type="molecule type" value="Genomic_DNA"/>
</dbReference>
<dbReference type="RefSeq" id="WP_015840194.1">
    <property type="nucleotide sequence ID" value="NC_012917.1"/>
</dbReference>
<dbReference type="SMR" id="C6DGV2"/>
<dbReference type="STRING" id="561230.PC1_1960"/>
<dbReference type="KEGG" id="pct:PC1_1960"/>
<dbReference type="eggNOG" id="COG2718">
    <property type="taxonomic scope" value="Bacteria"/>
</dbReference>
<dbReference type="HOGENOM" id="CLU_049702_0_0_6"/>
<dbReference type="OrthoDB" id="9788289at2"/>
<dbReference type="Proteomes" id="UP000002736">
    <property type="component" value="Chromosome"/>
</dbReference>
<dbReference type="HAMAP" id="MF_01232">
    <property type="entry name" value="UPF0229"/>
    <property type="match status" value="1"/>
</dbReference>
<dbReference type="InterPro" id="IPR006698">
    <property type="entry name" value="UPF0229"/>
</dbReference>
<dbReference type="NCBIfam" id="NF003707">
    <property type="entry name" value="PRK05325.1-2"/>
    <property type="match status" value="1"/>
</dbReference>
<dbReference type="NCBIfam" id="NF003708">
    <property type="entry name" value="PRK05325.1-3"/>
    <property type="match status" value="1"/>
</dbReference>
<dbReference type="PANTHER" id="PTHR30510">
    <property type="entry name" value="UPF0229 PROTEIN YEAH"/>
    <property type="match status" value="1"/>
</dbReference>
<dbReference type="PANTHER" id="PTHR30510:SF2">
    <property type="entry name" value="UPF0229 PROTEIN YEAH"/>
    <property type="match status" value="1"/>
</dbReference>
<dbReference type="Pfam" id="PF04285">
    <property type="entry name" value="DUF444"/>
    <property type="match status" value="1"/>
</dbReference>
<protein>
    <recommendedName>
        <fullName evidence="1">UPF0229 protein PC1_1960</fullName>
    </recommendedName>
</protein>
<evidence type="ECO:0000255" key="1">
    <source>
        <dbReference type="HAMAP-Rule" id="MF_01232"/>
    </source>
</evidence>
<evidence type="ECO:0000256" key="2">
    <source>
        <dbReference type="SAM" id="MobiDB-lite"/>
    </source>
</evidence>
<gene>
    <name type="ordered locus">PC1_1960</name>
</gene>
<organism>
    <name type="scientific">Pectobacterium carotovorum subsp. carotovorum (strain PC1)</name>
    <dbReference type="NCBI Taxonomy" id="561230"/>
    <lineage>
        <taxon>Bacteria</taxon>
        <taxon>Pseudomonadati</taxon>
        <taxon>Pseudomonadota</taxon>
        <taxon>Gammaproteobacteria</taxon>
        <taxon>Enterobacterales</taxon>
        <taxon>Pectobacteriaceae</taxon>
        <taxon>Pectobacterium</taxon>
    </lineage>
</organism>